<reference key="1">
    <citation type="journal article" date="2008" name="J. Bacteriol.">
        <title>The complete genome sequence of Thermococcus onnurineus NA1 reveals a mixed heterotrophic and carboxydotrophic metabolism.</title>
        <authorList>
            <person name="Lee H.S."/>
            <person name="Kang S.G."/>
            <person name="Bae S.S."/>
            <person name="Lim J.K."/>
            <person name="Cho Y."/>
            <person name="Kim Y.J."/>
            <person name="Jeon J.H."/>
            <person name="Cha S.-S."/>
            <person name="Kwon K.K."/>
            <person name="Kim H.-T."/>
            <person name="Park C.-J."/>
            <person name="Lee H.-W."/>
            <person name="Kim S.I."/>
            <person name="Chun J."/>
            <person name="Colwell R.R."/>
            <person name="Kim S.-J."/>
            <person name="Lee J.-H."/>
        </authorList>
    </citation>
    <scope>NUCLEOTIDE SEQUENCE [LARGE SCALE GENOMIC DNA]</scope>
    <source>
        <strain>NA1</strain>
    </source>
</reference>
<gene>
    <name type="ordered locus">TON_1102</name>
</gene>
<dbReference type="EMBL" id="CP000855">
    <property type="protein sequence ID" value="ACJ16590.1"/>
    <property type="molecule type" value="Genomic_DNA"/>
</dbReference>
<dbReference type="RefSeq" id="WP_012572062.1">
    <property type="nucleotide sequence ID" value="NC_011529.1"/>
</dbReference>
<dbReference type="SMR" id="B6YWX7"/>
<dbReference type="STRING" id="523850.TON_1102"/>
<dbReference type="GeneID" id="7018124"/>
<dbReference type="KEGG" id="ton:TON_1102"/>
<dbReference type="PATRIC" id="fig|523850.10.peg.1110"/>
<dbReference type="eggNOG" id="arCOG04179">
    <property type="taxonomic scope" value="Archaea"/>
</dbReference>
<dbReference type="HOGENOM" id="CLU_122978_3_0_2"/>
<dbReference type="OrthoDB" id="7912at2157"/>
<dbReference type="Proteomes" id="UP000002727">
    <property type="component" value="Chromosome"/>
</dbReference>
<dbReference type="GO" id="GO:0005829">
    <property type="term" value="C:cytosol"/>
    <property type="evidence" value="ECO:0007669"/>
    <property type="project" value="TreeGrafter"/>
</dbReference>
<dbReference type="GO" id="GO:0003677">
    <property type="term" value="F:DNA binding"/>
    <property type="evidence" value="ECO:0007669"/>
    <property type="project" value="UniProtKB-UniRule"/>
</dbReference>
<dbReference type="Gene3D" id="1.10.8.140">
    <property type="entry name" value="PDCD5-like"/>
    <property type="match status" value="1"/>
</dbReference>
<dbReference type="HAMAP" id="MF_00026">
    <property type="entry name" value="dsDNA_bind"/>
    <property type="match status" value="1"/>
</dbReference>
<dbReference type="InterPro" id="IPR022889">
    <property type="entry name" value="DNA_bind_arc"/>
</dbReference>
<dbReference type="InterPro" id="IPR002836">
    <property type="entry name" value="PDCD5-like"/>
</dbReference>
<dbReference type="InterPro" id="IPR036883">
    <property type="entry name" value="PDCD5-like_sf"/>
</dbReference>
<dbReference type="NCBIfam" id="NF003268">
    <property type="entry name" value="PRK04239.1"/>
    <property type="match status" value="1"/>
</dbReference>
<dbReference type="PANTHER" id="PTHR10840">
    <property type="entry name" value="PROGRAMMED CELL DEATH PROTEIN 5"/>
    <property type="match status" value="1"/>
</dbReference>
<dbReference type="PANTHER" id="PTHR10840:SF0">
    <property type="entry name" value="PROGRAMMED CELL DEATH PROTEIN 5"/>
    <property type="match status" value="1"/>
</dbReference>
<dbReference type="Pfam" id="PF01984">
    <property type="entry name" value="dsDNA_bind"/>
    <property type="match status" value="1"/>
</dbReference>
<dbReference type="PIRSF" id="PIRSF015730">
    <property type="entry name" value="TFAR19"/>
    <property type="match status" value="1"/>
</dbReference>
<dbReference type="SUPFAM" id="SSF46950">
    <property type="entry name" value="Double-stranded DNA-binding domain"/>
    <property type="match status" value="1"/>
</dbReference>
<proteinExistence type="inferred from homology"/>
<comment type="similarity">
    <text evidence="1">Belongs to the PDCD5 family.</text>
</comment>
<organism>
    <name type="scientific">Thermococcus onnurineus (strain NA1)</name>
    <dbReference type="NCBI Taxonomy" id="523850"/>
    <lineage>
        <taxon>Archaea</taxon>
        <taxon>Methanobacteriati</taxon>
        <taxon>Methanobacteriota</taxon>
        <taxon>Thermococci</taxon>
        <taxon>Thermococcales</taxon>
        <taxon>Thermococcaceae</taxon>
        <taxon>Thermococcus</taxon>
    </lineage>
</organism>
<evidence type="ECO:0000255" key="1">
    <source>
        <dbReference type="HAMAP-Rule" id="MF_00026"/>
    </source>
</evidence>
<accession>B6YWX7</accession>
<feature type="chain" id="PRO_1000090215" description="DNA-binding protein TON_1102">
    <location>
        <begin position="1"/>
        <end position="112"/>
    </location>
</feature>
<protein>
    <recommendedName>
        <fullName evidence="1">DNA-binding protein TON_1102</fullName>
    </recommendedName>
</protein>
<keyword id="KW-0238">DNA-binding</keyword>
<sequence length="112" mass="13427">MAEDIEEIRKKKLLELQKRYLEQQKAQEEAIRQEMELEAQLNAIMRHILTPEARERLGRVKLVRPELARQVELVLVQLYQAGQIREPIDDAKLKKILAQIDARTRRDFRIKW</sequence>
<name>Y1102_THEON</name>